<keyword id="KW-0687">Ribonucleoprotein</keyword>
<keyword id="KW-0689">Ribosomal protein</keyword>
<keyword id="KW-0694">RNA-binding</keyword>
<keyword id="KW-0699">rRNA-binding</keyword>
<keyword id="KW-0820">tRNA-binding</keyword>
<dbReference type="EMBL" id="CP000937">
    <property type="protein sequence ID" value="ABZ86784.1"/>
    <property type="molecule type" value="Genomic_DNA"/>
</dbReference>
<dbReference type="SMR" id="B0U0W8"/>
<dbReference type="KEGG" id="fph:Fphi_0566"/>
<dbReference type="eggNOG" id="COG0099">
    <property type="taxonomic scope" value="Bacteria"/>
</dbReference>
<dbReference type="HOGENOM" id="CLU_103849_1_2_6"/>
<dbReference type="GO" id="GO:0005829">
    <property type="term" value="C:cytosol"/>
    <property type="evidence" value="ECO:0007669"/>
    <property type="project" value="TreeGrafter"/>
</dbReference>
<dbReference type="GO" id="GO:0015935">
    <property type="term" value="C:small ribosomal subunit"/>
    <property type="evidence" value="ECO:0007669"/>
    <property type="project" value="TreeGrafter"/>
</dbReference>
<dbReference type="GO" id="GO:0019843">
    <property type="term" value="F:rRNA binding"/>
    <property type="evidence" value="ECO:0007669"/>
    <property type="project" value="UniProtKB-UniRule"/>
</dbReference>
<dbReference type="GO" id="GO:0003735">
    <property type="term" value="F:structural constituent of ribosome"/>
    <property type="evidence" value="ECO:0007669"/>
    <property type="project" value="InterPro"/>
</dbReference>
<dbReference type="GO" id="GO:0000049">
    <property type="term" value="F:tRNA binding"/>
    <property type="evidence" value="ECO:0007669"/>
    <property type="project" value="UniProtKB-UniRule"/>
</dbReference>
<dbReference type="GO" id="GO:0006412">
    <property type="term" value="P:translation"/>
    <property type="evidence" value="ECO:0007669"/>
    <property type="project" value="UniProtKB-UniRule"/>
</dbReference>
<dbReference type="FunFam" id="1.10.8.50:FF:000001">
    <property type="entry name" value="30S ribosomal protein S13"/>
    <property type="match status" value="1"/>
</dbReference>
<dbReference type="FunFam" id="4.10.910.10:FF:000001">
    <property type="entry name" value="30S ribosomal protein S13"/>
    <property type="match status" value="1"/>
</dbReference>
<dbReference type="Gene3D" id="1.10.8.50">
    <property type="match status" value="1"/>
</dbReference>
<dbReference type="Gene3D" id="4.10.910.10">
    <property type="entry name" value="30s ribosomal protein s13, domain 2"/>
    <property type="match status" value="1"/>
</dbReference>
<dbReference type="HAMAP" id="MF_01315">
    <property type="entry name" value="Ribosomal_uS13"/>
    <property type="match status" value="1"/>
</dbReference>
<dbReference type="InterPro" id="IPR027437">
    <property type="entry name" value="Rbsml_uS13_C"/>
</dbReference>
<dbReference type="InterPro" id="IPR001892">
    <property type="entry name" value="Ribosomal_uS13"/>
</dbReference>
<dbReference type="InterPro" id="IPR010979">
    <property type="entry name" value="Ribosomal_uS13-like_H2TH"/>
</dbReference>
<dbReference type="InterPro" id="IPR019980">
    <property type="entry name" value="Ribosomal_uS13_bac-type"/>
</dbReference>
<dbReference type="InterPro" id="IPR018269">
    <property type="entry name" value="Ribosomal_uS13_CS"/>
</dbReference>
<dbReference type="NCBIfam" id="TIGR03631">
    <property type="entry name" value="uS13_bact"/>
    <property type="match status" value="1"/>
</dbReference>
<dbReference type="PANTHER" id="PTHR10871">
    <property type="entry name" value="30S RIBOSOMAL PROTEIN S13/40S RIBOSOMAL PROTEIN S18"/>
    <property type="match status" value="1"/>
</dbReference>
<dbReference type="PANTHER" id="PTHR10871:SF1">
    <property type="entry name" value="SMALL RIBOSOMAL SUBUNIT PROTEIN US13M"/>
    <property type="match status" value="1"/>
</dbReference>
<dbReference type="Pfam" id="PF00416">
    <property type="entry name" value="Ribosomal_S13"/>
    <property type="match status" value="1"/>
</dbReference>
<dbReference type="PIRSF" id="PIRSF002134">
    <property type="entry name" value="Ribosomal_S13"/>
    <property type="match status" value="1"/>
</dbReference>
<dbReference type="SUPFAM" id="SSF46946">
    <property type="entry name" value="S13-like H2TH domain"/>
    <property type="match status" value="1"/>
</dbReference>
<dbReference type="PROSITE" id="PS00646">
    <property type="entry name" value="RIBOSOMAL_S13_1"/>
    <property type="match status" value="1"/>
</dbReference>
<dbReference type="PROSITE" id="PS50159">
    <property type="entry name" value="RIBOSOMAL_S13_2"/>
    <property type="match status" value="1"/>
</dbReference>
<evidence type="ECO:0000255" key="1">
    <source>
        <dbReference type="HAMAP-Rule" id="MF_01315"/>
    </source>
</evidence>
<evidence type="ECO:0000256" key="2">
    <source>
        <dbReference type="SAM" id="MobiDB-lite"/>
    </source>
</evidence>
<evidence type="ECO:0000305" key="3"/>
<comment type="function">
    <text evidence="1">Located at the top of the head of the 30S subunit, it contacts several helices of the 16S rRNA. In the 70S ribosome it contacts the 23S rRNA (bridge B1a) and protein L5 of the 50S subunit (bridge B1b), connecting the 2 subunits; these bridges are implicated in subunit movement. Contacts the tRNAs in the A and P-sites.</text>
</comment>
<comment type="subunit">
    <text evidence="1">Part of the 30S ribosomal subunit. Forms a loose heterodimer with protein S19. Forms two bridges to the 50S subunit in the 70S ribosome.</text>
</comment>
<comment type="similarity">
    <text evidence="1">Belongs to the universal ribosomal protein uS13 family.</text>
</comment>
<name>RS13_FRAP2</name>
<gene>
    <name evidence="1" type="primary">rpsM</name>
    <name type="ordered locus">Fphi_0566</name>
</gene>
<accession>B0U0W8</accession>
<sequence>MARIAGVNIPVHKHTVIGLTSIYGIGKTRAQQICQSCKVDPTVKIKDLSEEQIETLRTEVAKFTVEGDLRREVSMDIKRLMDLGCFRGRRHRRSLPVRGQRTKTNARTRKGPRKPIKA</sequence>
<protein>
    <recommendedName>
        <fullName evidence="1">Small ribosomal subunit protein uS13</fullName>
    </recommendedName>
    <alternativeName>
        <fullName evidence="3">30S ribosomal protein S13</fullName>
    </alternativeName>
</protein>
<organism>
    <name type="scientific">Francisella philomiragia subsp. philomiragia (strain ATCC 25017 / CCUG 19701 / FSC 153 / O#319-036)</name>
    <dbReference type="NCBI Taxonomy" id="484022"/>
    <lineage>
        <taxon>Bacteria</taxon>
        <taxon>Pseudomonadati</taxon>
        <taxon>Pseudomonadota</taxon>
        <taxon>Gammaproteobacteria</taxon>
        <taxon>Thiotrichales</taxon>
        <taxon>Francisellaceae</taxon>
        <taxon>Francisella</taxon>
    </lineage>
</organism>
<proteinExistence type="inferred from homology"/>
<feature type="chain" id="PRO_1000086240" description="Small ribosomal subunit protein uS13">
    <location>
        <begin position="1"/>
        <end position="118"/>
    </location>
</feature>
<feature type="region of interest" description="Disordered" evidence="2">
    <location>
        <begin position="91"/>
        <end position="118"/>
    </location>
</feature>
<reference key="1">
    <citation type="submission" date="2007-12" db="EMBL/GenBank/DDBJ databases">
        <title>Complete sequence of chromosome of Francisella philomiragia subsp. philomiragia ATCC 25017.</title>
        <authorList>
            <consortium name="US DOE Joint Genome Institute"/>
            <person name="Copeland A."/>
            <person name="Lucas S."/>
            <person name="Lapidus A."/>
            <person name="Barry K."/>
            <person name="Detter J.C."/>
            <person name="Glavina del Rio T."/>
            <person name="Hammon N."/>
            <person name="Israni S."/>
            <person name="Dalin E."/>
            <person name="Tice H."/>
            <person name="Pitluck S."/>
            <person name="Chain P."/>
            <person name="Malfatti S."/>
            <person name="Shin M."/>
            <person name="Vergez L."/>
            <person name="Schmutz J."/>
            <person name="Larimer F."/>
            <person name="Land M."/>
            <person name="Hauser L."/>
            <person name="Richardson P."/>
        </authorList>
    </citation>
    <scope>NUCLEOTIDE SEQUENCE [LARGE SCALE GENOMIC DNA]</scope>
    <source>
        <strain>ATCC 25017 / CCUG 19701 / FSC 153 / O#319-036</strain>
    </source>
</reference>